<dbReference type="EMBL" id="AJ224932">
    <property type="protein sequence ID" value="CAA12231.1"/>
    <property type="molecule type" value="mRNA"/>
</dbReference>
<dbReference type="PIR" id="T06390">
    <property type="entry name" value="T06390"/>
</dbReference>
<dbReference type="SMR" id="O65819"/>
<dbReference type="FunCoup" id="O65819">
    <property type="interactions" value="2306"/>
</dbReference>
<dbReference type="STRING" id="4081.O65819"/>
<dbReference type="PaxDb" id="4081-Solyc05g055440.1.1"/>
<dbReference type="eggNOG" id="KOG1744">
    <property type="taxonomic scope" value="Eukaryota"/>
</dbReference>
<dbReference type="InParanoid" id="O65819"/>
<dbReference type="Proteomes" id="UP000004994">
    <property type="component" value="Unplaced"/>
</dbReference>
<dbReference type="ExpressionAtlas" id="O65819">
    <property type="expression patterns" value="baseline and differential"/>
</dbReference>
<dbReference type="GO" id="GO:0000786">
    <property type="term" value="C:nucleosome"/>
    <property type="evidence" value="ECO:0007669"/>
    <property type="project" value="UniProtKB-KW"/>
</dbReference>
<dbReference type="GO" id="GO:0005634">
    <property type="term" value="C:nucleus"/>
    <property type="evidence" value="ECO:0007669"/>
    <property type="project" value="UniProtKB-SubCell"/>
</dbReference>
<dbReference type="GO" id="GO:0003677">
    <property type="term" value="F:DNA binding"/>
    <property type="evidence" value="ECO:0000318"/>
    <property type="project" value="GO_Central"/>
</dbReference>
<dbReference type="GO" id="GO:0046982">
    <property type="term" value="F:protein heterodimerization activity"/>
    <property type="evidence" value="ECO:0007669"/>
    <property type="project" value="InterPro"/>
</dbReference>
<dbReference type="GO" id="GO:0030527">
    <property type="term" value="F:structural constituent of chromatin"/>
    <property type="evidence" value="ECO:0007669"/>
    <property type="project" value="InterPro"/>
</dbReference>
<dbReference type="CDD" id="cd22910">
    <property type="entry name" value="HFD_H2B"/>
    <property type="match status" value="1"/>
</dbReference>
<dbReference type="FunFam" id="1.10.20.10:FF:000014">
    <property type="entry name" value="Histone H2B"/>
    <property type="match status" value="1"/>
</dbReference>
<dbReference type="Gene3D" id="1.10.20.10">
    <property type="entry name" value="Histone, subunit A"/>
    <property type="match status" value="1"/>
</dbReference>
<dbReference type="InterPro" id="IPR009072">
    <property type="entry name" value="Histone-fold"/>
</dbReference>
<dbReference type="InterPro" id="IPR007125">
    <property type="entry name" value="Histone_H2A/H2B/H3"/>
</dbReference>
<dbReference type="InterPro" id="IPR000558">
    <property type="entry name" value="Histone_H2B"/>
</dbReference>
<dbReference type="InterPro" id="IPR055333">
    <property type="entry name" value="HISTONE_H2B_site"/>
</dbReference>
<dbReference type="PANTHER" id="PTHR23428">
    <property type="entry name" value="HISTONE H2B"/>
    <property type="match status" value="1"/>
</dbReference>
<dbReference type="Pfam" id="PF00125">
    <property type="entry name" value="Histone"/>
    <property type="match status" value="1"/>
</dbReference>
<dbReference type="PRINTS" id="PR00621">
    <property type="entry name" value="HISTONEH2B"/>
</dbReference>
<dbReference type="SMART" id="SM00427">
    <property type="entry name" value="H2B"/>
    <property type="match status" value="1"/>
</dbReference>
<dbReference type="SUPFAM" id="SSF47113">
    <property type="entry name" value="Histone-fold"/>
    <property type="match status" value="1"/>
</dbReference>
<dbReference type="PROSITE" id="PS00357">
    <property type="entry name" value="HISTONE_H2B"/>
    <property type="match status" value="1"/>
</dbReference>
<proteinExistence type="evidence at transcript level"/>
<accession>O65819</accession>
<protein>
    <recommendedName>
        <fullName>Histone H2B.3</fullName>
    </recommendedName>
    <alternativeName>
        <fullName>LeH2B-3</fullName>
    </alternativeName>
</protein>
<keyword id="KW-0007">Acetylation</keyword>
<keyword id="KW-0158">Chromosome</keyword>
<keyword id="KW-0238">DNA-binding</keyword>
<keyword id="KW-1017">Isopeptide bond</keyword>
<keyword id="KW-0544">Nucleosome core</keyword>
<keyword id="KW-0539">Nucleus</keyword>
<keyword id="KW-1185">Reference proteome</keyword>
<keyword id="KW-0832">Ubl conjugation</keyword>
<organism>
    <name type="scientific">Solanum lycopersicum</name>
    <name type="common">Tomato</name>
    <name type="synonym">Lycopersicon esculentum</name>
    <dbReference type="NCBI Taxonomy" id="4081"/>
    <lineage>
        <taxon>Eukaryota</taxon>
        <taxon>Viridiplantae</taxon>
        <taxon>Streptophyta</taxon>
        <taxon>Embryophyta</taxon>
        <taxon>Tracheophyta</taxon>
        <taxon>Spermatophyta</taxon>
        <taxon>Magnoliopsida</taxon>
        <taxon>eudicotyledons</taxon>
        <taxon>Gunneridae</taxon>
        <taxon>Pentapetalae</taxon>
        <taxon>asterids</taxon>
        <taxon>lamiids</taxon>
        <taxon>Solanales</taxon>
        <taxon>Solanaceae</taxon>
        <taxon>Solanoideae</taxon>
        <taxon>Solaneae</taxon>
        <taxon>Solanum</taxon>
        <taxon>Solanum subgen. Lycopersicon</taxon>
    </lineage>
</organism>
<evidence type="ECO:0000250" key="1"/>
<evidence type="ECO:0000256" key="2">
    <source>
        <dbReference type="SAM" id="MobiDB-lite"/>
    </source>
</evidence>
<evidence type="ECO:0000269" key="3">
    <source>
    </source>
</evidence>
<evidence type="ECO:0000305" key="4"/>
<gene>
    <name type="primary">H2B-3</name>
</gene>
<feature type="chain" id="PRO_0000240451" description="Histone H2B.3">
    <location>
        <begin position="1" status="less than"/>
        <end position="137"/>
    </location>
</feature>
<feature type="region of interest" description="Disordered" evidence="2">
    <location>
        <begin position="1"/>
        <end position="45"/>
    </location>
</feature>
<feature type="compositionally biased region" description="Basic and acidic residues" evidence="2">
    <location>
        <begin position="1"/>
        <end position="37"/>
    </location>
</feature>
<feature type="modified residue" description="N6-acetyllysine" evidence="1">
    <location>
        <position position="27"/>
    </location>
</feature>
<feature type="modified residue" description="N6-acetyllysine" evidence="1">
    <location>
        <position position="28"/>
    </location>
</feature>
<feature type="cross-link" description="Glycyl lysine isopeptide (Lys-Gly) (interchain with G-Cter in ubiquitin)" evidence="1">
    <location>
        <position position="133"/>
    </location>
</feature>
<feature type="non-terminal residue">
    <location>
        <position position="1"/>
    </location>
</feature>
<reference key="1">
    <citation type="journal article" date="1999" name="Plant Mol. Biol.">
        <title>Isolation and molecular characterization of gibberellin-regulated H1 and H2B histone cDNAs in the leaf of the gibberellin-deficient tomato.</title>
        <authorList>
            <person name="van den Heuvel K.J.P.T."/>
            <person name="van Esch R.J."/>
            <person name="Barendse G.W.M."/>
            <person name="Wullems G.J."/>
        </authorList>
    </citation>
    <scope>NUCLEOTIDE SEQUENCE [MRNA]</scope>
    <scope>TISSUE SPECIFICITY</scope>
    <scope>INDUCTION</scope>
    <source>
        <strain>cv. Moneymaker</strain>
        <tissue>Anther</tissue>
    </source>
</reference>
<name>H2B3_SOLLC</name>
<sequence>KPAEKKPAEKTPVAEKAPAEKKPKAGKKLPKDAAAGDKKKKRSKKAVETYKIYIFKVLKQVHPDIGISSKAMGIMNSFINDIFEKLAQEASRLARYNKKPTITSREIQTAVRLVLPGELAKHAVSEGTKAVTKFTSS</sequence>
<comment type="function">
    <text>Core component of nucleosome. Nucleosomes wrap and compact DNA into chromatin, limiting DNA accessibility to the cellular machineries which require DNA as a template. Histones thereby play a central role in transcription regulation, DNA repair, DNA replication and chromosomal stability. DNA accessibility is regulated via a complex set of post-translational modifications of histones, also called histone code, and nucleosome remodeling.</text>
</comment>
<comment type="subunit">
    <text>The nucleosome is a histone octamer containing two molecules each of H2A, H2B, H3 and H4 assembled in one H3-H4 heterotetramer and two H2A-H2B heterodimers. The octamer wraps approximately 147 bp of DNA.</text>
</comment>
<comment type="subcellular location">
    <subcellularLocation>
        <location evidence="1">Nucleus</location>
    </subcellularLocation>
    <subcellularLocation>
        <location evidence="1">Chromosome</location>
    </subcellularLocation>
</comment>
<comment type="tissue specificity">
    <text evidence="3">Ubiquitous. Highest level in shoots, fruits and young flower buds, including petals, anthers and ovules.</text>
</comment>
<comment type="induction">
    <text evidence="3">By gibberellins GA1, GA3, GA4 and GA9.</text>
</comment>
<comment type="PTM">
    <text evidence="1">Can be acetylated to formH2BK33ac and H2BK34ac.</text>
</comment>
<comment type="PTM">
    <text evidence="1">Monoubiquitinated to form H2BK143ub1; may give a specific tag for epigenetic transcriptional activation.</text>
</comment>
<comment type="similarity">
    <text evidence="4">Belongs to the histone H2B family.</text>
</comment>
<comment type="caution">
    <text evidence="4">To ensure consistency between histone entries, we follow the 'Brno' nomenclature for histone modifications, with positions referring to those used in the literature for the 'closest' model organism. Due to slight variations in histone sequences between organisms and to the presence of initiator methionine in UniProtKB/Swiss-Prot sequences, the actual positions of modified amino acids in the sequence generally differ. In this entry the following conventions are used: H2BK33ac = acetylated Lys-27; H2BK34ac = acetylated Lys-28; H2BK143ub1 = monoubiquitinated Lys-133.</text>
</comment>